<accession>Q3E829</accession>
<accession>D6VRI9</accession>
<comment type="function">
    <text evidence="1 2 4">DNA-binding component of a FANCM-MHF complex involved in DNA damage repair and genome maintenance (PubMed:20347428). FANCM-MHF promotes gene conversion at blocked replication forks, probably by reversal of the stalled fork (By similarity). Component of the kinetochore, a multiprotein complex that assembles on centromeric DNA and attaches chromosomes to spindle microtubules, mediating chromosome segregation and sister chromatid segregation during meiosis and mitosis. Component of the inner kinetochore constitutive centromere-associated network (CCAN), which serves as a structural platform for outer kinetochore assembly (PubMed:22561346).</text>
</comment>
<comment type="subunit">
    <text evidence="3 9">The MHF histone-fold complex is a heterotetramer of 2 MHF1-MHF2 heterodimers. Together with MPH1/FANCM, forms the FANCM-MHF complex (PubMed:22325783). Component of the inner kinetochore constitutive centromere-associated network (CCAN) (also known as central kinetochore CTF19 complex in yeast), which is composed of at least AME1, CHL4, CNN1, CTF3, CTF19, IML3, MCM16, MCM21, MCM22, MHF1, MHF2, MIF2, NKP1, NKP2, OKP1 and WIP1 (Probable).</text>
</comment>
<comment type="interaction">
    <interactant intactId="EBI-15968870">
        <id>Q3E829</id>
    </interactant>
    <interactant intactId="EBI-2881690">
        <id>Q3E835</id>
        <label>MHF1</label>
    </interactant>
    <organismsDiffer>false</organismsDiffer>
    <experiments>3</experiments>
</comment>
<comment type="similarity">
    <text evidence="7">Belongs to the CENP-X/MHF2 family.</text>
</comment>
<sequence>MLSKEALIKILSQNEGGNDMKIADEVVPMIQKYLDIFIDEAVLRSLQSHKDINGERGDKSPLELSHQDLERIVGLLLMDM</sequence>
<dbReference type="EMBL" id="Z74210">
    <property type="status" value="NOT_ANNOTATED_CDS"/>
    <property type="molecule type" value="Genomic_DNA"/>
</dbReference>
<dbReference type="EMBL" id="BK006938">
    <property type="protein sequence ID" value="DAA11699.1"/>
    <property type="molecule type" value="Genomic_DNA"/>
</dbReference>
<dbReference type="RefSeq" id="NP_878060.1">
    <property type="nucleotide sequence ID" value="NM_001184530.1"/>
</dbReference>
<dbReference type="PDB" id="3V9R">
    <property type="method" value="X-ray"/>
    <property type="resolution" value="2.40 A"/>
    <property type="chains" value="B/D=1-80"/>
</dbReference>
<dbReference type="PDBsum" id="3V9R"/>
<dbReference type="SMR" id="Q3E829"/>
<dbReference type="BioGRID" id="36973">
    <property type="interactions" value="34"/>
</dbReference>
<dbReference type="ComplexPortal" id="CPX-2533">
    <property type="entry name" value="Kinetochore CCAN complex"/>
</dbReference>
<dbReference type="DIP" id="DIP-59642N"/>
<dbReference type="FunCoup" id="Q3E829">
    <property type="interactions" value="25"/>
</dbReference>
<dbReference type="IntAct" id="Q3E829">
    <property type="interactions" value="3"/>
</dbReference>
<dbReference type="STRING" id="4932.YDL160C-A"/>
<dbReference type="iPTMnet" id="Q3E829"/>
<dbReference type="PaxDb" id="4932-YDL160C-A"/>
<dbReference type="PeptideAtlas" id="Q3E829"/>
<dbReference type="EnsemblFungi" id="YDL160C-A_mRNA">
    <property type="protein sequence ID" value="YDL160C-A"/>
    <property type="gene ID" value="YDL160C-A"/>
</dbReference>
<dbReference type="GeneID" id="1466431"/>
<dbReference type="KEGG" id="sce:YDL160C-A"/>
<dbReference type="AGR" id="SGD:S000028520"/>
<dbReference type="SGD" id="S000028520">
    <property type="gene designation" value="MHF2"/>
</dbReference>
<dbReference type="VEuPathDB" id="FungiDB:YDL160C-A"/>
<dbReference type="eggNOG" id="ENOG502S826">
    <property type="taxonomic scope" value="Eukaryota"/>
</dbReference>
<dbReference type="HOGENOM" id="CLU_113787_0_0_1"/>
<dbReference type="InParanoid" id="Q3E829"/>
<dbReference type="OMA" id="VPMIQKY"/>
<dbReference type="OrthoDB" id="2500381at2759"/>
<dbReference type="BioCyc" id="YEAST:G3O-30114-MONOMER"/>
<dbReference type="BioGRID-ORCS" id="1466431">
    <property type="hits" value="0 hits in 10 CRISPR screens"/>
</dbReference>
<dbReference type="EvolutionaryTrace" id="Q3E829"/>
<dbReference type="PRO" id="PR:Q3E829"/>
<dbReference type="Proteomes" id="UP000002311">
    <property type="component" value="Chromosome IV"/>
</dbReference>
<dbReference type="RNAct" id="Q3E829">
    <property type="molecule type" value="protein"/>
</dbReference>
<dbReference type="GO" id="GO:0071821">
    <property type="term" value="C:FANCM-MHF complex"/>
    <property type="evidence" value="ECO:0000314"/>
    <property type="project" value="SGD"/>
</dbReference>
<dbReference type="GO" id="GO:0003677">
    <property type="term" value="F:DNA binding"/>
    <property type="evidence" value="ECO:0007669"/>
    <property type="project" value="UniProtKB-KW"/>
</dbReference>
<dbReference type="GO" id="GO:0046982">
    <property type="term" value="F:protein heterodimerization activity"/>
    <property type="evidence" value="ECO:0007669"/>
    <property type="project" value="InterPro"/>
</dbReference>
<dbReference type="GO" id="GO:0006974">
    <property type="term" value="P:DNA damage response"/>
    <property type="evidence" value="ECO:0000316"/>
    <property type="project" value="SGD"/>
</dbReference>
<dbReference type="GO" id="GO:0006281">
    <property type="term" value="P:DNA repair"/>
    <property type="evidence" value="ECO:0007669"/>
    <property type="project" value="UniProtKB-KW"/>
</dbReference>
<dbReference type="GO" id="GO:0051382">
    <property type="term" value="P:kinetochore assembly"/>
    <property type="evidence" value="ECO:0007669"/>
    <property type="project" value="InterPro"/>
</dbReference>
<dbReference type="GO" id="GO:0031297">
    <property type="term" value="P:replication fork processing"/>
    <property type="evidence" value="ECO:0000318"/>
    <property type="project" value="GO_Central"/>
</dbReference>
<dbReference type="GO" id="GO:0000712">
    <property type="term" value="P:resolution of meiotic recombination intermediates"/>
    <property type="evidence" value="ECO:0000318"/>
    <property type="project" value="GO_Central"/>
</dbReference>
<dbReference type="CDD" id="cd22921">
    <property type="entry name" value="HFD_CENP-X"/>
    <property type="match status" value="1"/>
</dbReference>
<dbReference type="FunFam" id="1.10.20.10:FF:000141">
    <property type="entry name" value="Inner kinetochore subunit MHF2"/>
    <property type="match status" value="1"/>
</dbReference>
<dbReference type="Gene3D" id="1.10.20.10">
    <property type="entry name" value="Histone, subunit A"/>
    <property type="match status" value="1"/>
</dbReference>
<dbReference type="InterPro" id="IPR018552">
    <property type="entry name" value="CENP-X"/>
</dbReference>
<dbReference type="InterPro" id="IPR009072">
    <property type="entry name" value="Histone-fold"/>
</dbReference>
<dbReference type="Pfam" id="PF09415">
    <property type="entry name" value="CENP-X"/>
    <property type="match status" value="1"/>
</dbReference>
<feature type="chain" id="PRO_0000240877" description="Inner kinetochore subunit MHF2">
    <location>
        <begin position="1"/>
        <end position="80"/>
    </location>
</feature>
<feature type="helix" evidence="11">
    <location>
        <begin position="5"/>
        <end position="11"/>
    </location>
</feature>
<feature type="turn" evidence="11">
    <location>
        <begin position="12"/>
        <end position="14"/>
    </location>
</feature>
<feature type="turn" evidence="11">
    <location>
        <begin position="24"/>
        <end position="26"/>
    </location>
</feature>
<feature type="helix" evidence="11">
    <location>
        <begin position="27"/>
        <end position="50"/>
    </location>
</feature>
<feature type="helix" evidence="11">
    <location>
        <begin position="66"/>
        <end position="79"/>
    </location>
</feature>
<reference key="1">
    <citation type="journal article" date="1997" name="Nature">
        <title>The nucleotide sequence of Saccharomyces cerevisiae chromosome IV.</title>
        <authorList>
            <person name="Jacq C."/>
            <person name="Alt-Moerbe J."/>
            <person name="Andre B."/>
            <person name="Arnold W."/>
            <person name="Bahr A."/>
            <person name="Ballesta J.P.G."/>
            <person name="Bargues M."/>
            <person name="Baron L."/>
            <person name="Becker A."/>
            <person name="Biteau N."/>
            <person name="Bloecker H."/>
            <person name="Blugeon C."/>
            <person name="Boskovic J."/>
            <person name="Brandt P."/>
            <person name="Brueckner M."/>
            <person name="Buitrago M.J."/>
            <person name="Coster F."/>
            <person name="Delaveau T."/>
            <person name="del Rey F."/>
            <person name="Dujon B."/>
            <person name="Eide L.G."/>
            <person name="Garcia-Cantalejo J.M."/>
            <person name="Goffeau A."/>
            <person name="Gomez-Peris A."/>
            <person name="Granotier C."/>
            <person name="Hanemann V."/>
            <person name="Hankeln T."/>
            <person name="Hoheisel J.D."/>
            <person name="Jaeger W."/>
            <person name="Jimenez A."/>
            <person name="Jonniaux J.-L."/>
            <person name="Kraemer C."/>
            <person name="Kuester H."/>
            <person name="Laamanen P."/>
            <person name="Legros Y."/>
            <person name="Louis E.J."/>
            <person name="Moeller-Rieker S."/>
            <person name="Monnet A."/>
            <person name="Moro M."/>
            <person name="Mueller-Auer S."/>
            <person name="Nussbaumer B."/>
            <person name="Paricio N."/>
            <person name="Paulin L."/>
            <person name="Perea J."/>
            <person name="Perez-Alonso M."/>
            <person name="Perez-Ortin J.E."/>
            <person name="Pohl T.M."/>
            <person name="Prydz H."/>
            <person name="Purnelle B."/>
            <person name="Rasmussen S.W."/>
            <person name="Remacha M.A."/>
            <person name="Revuelta J.L."/>
            <person name="Rieger M."/>
            <person name="Salom D."/>
            <person name="Saluz H.P."/>
            <person name="Saiz J.E."/>
            <person name="Saren A.-M."/>
            <person name="Schaefer M."/>
            <person name="Scharfe M."/>
            <person name="Schmidt E.R."/>
            <person name="Schneider C."/>
            <person name="Scholler P."/>
            <person name="Schwarz S."/>
            <person name="Soler-Mira A."/>
            <person name="Urrestarazu L.A."/>
            <person name="Verhasselt P."/>
            <person name="Vissers S."/>
            <person name="Voet M."/>
            <person name="Volckaert G."/>
            <person name="Wagner G."/>
            <person name="Wambutt R."/>
            <person name="Wedler E."/>
            <person name="Wedler H."/>
            <person name="Woelfl S."/>
            <person name="Harris D.E."/>
            <person name="Bowman S."/>
            <person name="Brown D."/>
            <person name="Churcher C.M."/>
            <person name="Connor R."/>
            <person name="Dedman K."/>
            <person name="Gentles S."/>
            <person name="Hamlin N."/>
            <person name="Hunt S."/>
            <person name="Jones L."/>
            <person name="McDonald S."/>
            <person name="Murphy L.D."/>
            <person name="Niblett D."/>
            <person name="Odell C."/>
            <person name="Oliver K."/>
            <person name="Rajandream M.A."/>
            <person name="Richards C."/>
            <person name="Shore L."/>
            <person name="Walsh S.V."/>
            <person name="Barrell B.G."/>
            <person name="Dietrich F.S."/>
            <person name="Mulligan J.T."/>
            <person name="Allen E."/>
            <person name="Araujo R."/>
            <person name="Aviles E."/>
            <person name="Berno A."/>
            <person name="Carpenter J."/>
            <person name="Chen E."/>
            <person name="Cherry J.M."/>
            <person name="Chung E."/>
            <person name="Duncan M."/>
            <person name="Hunicke-Smith S."/>
            <person name="Hyman R.W."/>
            <person name="Komp C."/>
            <person name="Lashkari D."/>
            <person name="Lew H."/>
            <person name="Lin D."/>
            <person name="Mosedale D."/>
            <person name="Nakahara K."/>
            <person name="Namath A."/>
            <person name="Oefner P."/>
            <person name="Oh C."/>
            <person name="Petel F.X."/>
            <person name="Roberts D."/>
            <person name="Schramm S."/>
            <person name="Schroeder M."/>
            <person name="Shogren T."/>
            <person name="Shroff N."/>
            <person name="Winant A."/>
            <person name="Yelton M.A."/>
            <person name="Botstein D."/>
            <person name="Davis R.W."/>
            <person name="Johnston M."/>
            <person name="Andrews S."/>
            <person name="Brinkman R."/>
            <person name="Cooper J."/>
            <person name="Ding H."/>
            <person name="Du Z."/>
            <person name="Favello A."/>
            <person name="Fulton L."/>
            <person name="Gattung S."/>
            <person name="Greco T."/>
            <person name="Hallsworth K."/>
            <person name="Hawkins J."/>
            <person name="Hillier L.W."/>
            <person name="Jier M."/>
            <person name="Johnson D."/>
            <person name="Johnston L."/>
            <person name="Kirsten J."/>
            <person name="Kucaba T."/>
            <person name="Langston Y."/>
            <person name="Latreille P."/>
            <person name="Le T."/>
            <person name="Mardis E."/>
            <person name="Menezes S."/>
            <person name="Miller N."/>
            <person name="Nhan M."/>
            <person name="Pauley A."/>
            <person name="Peluso D."/>
            <person name="Rifkin L."/>
            <person name="Riles L."/>
            <person name="Taich A."/>
            <person name="Trevaskis E."/>
            <person name="Vignati D."/>
            <person name="Wilcox L."/>
            <person name="Wohldman P."/>
            <person name="Vaudin M."/>
            <person name="Wilson R."/>
            <person name="Waterston R."/>
            <person name="Albermann K."/>
            <person name="Hani J."/>
            <person name="Heumann K."/>
            <person name="Kleine K."/>
            <person name="Mewes H.-W."/>
            <person name="Zollner A."/>
            <person name="Zaccaria P."/>
        </authorList>
    </citation>
    <scope>NUCLEOTIDE SEQUENCE [LARGE SCALE GENOMIC DNA]</scope>
    <source>
        <strain>ATCC 204508 / S288c</strain>
    </source>
</reference>
<reference key="2">
    <citation type="journal article" date="2014" name="G3 (Bethesda)">
        <title>The reference genome sequence of Saccharomyces cerevisiae: Then and now.</title>
        <authorList>
            <person name="Engel S.R."/>
            <person name="Dietrich F.S."/>
            <person name="Fisk D.G."/>
            <person name="Binkley G."/>
            <person name="Balakrishnan R."/>
            <person name="Costanzo M.C."/>
            <person name="Dwight S.S."/>
            <person name="Hitz B.C."/>
            <person name="Karra K."/>
            <person name="Nash R.S."/>
            <person name="Weng S."/>
            <person name="Wong E.D."/>
            <person name="Lloyd P."/>
            <person name="Skrzypek M.S."/>
            <person name="Miyasato S.R."/>
            <person name="Simison M."/>
            <person name="Cherry J.M."/>
        </authorList>
    </citation>
    <scope>GENOME REANNOTATION</scope>
    <source>
        <strain>ATCC 204508 / S288c</strain>
    </source>
</reference>
<reference key="3">
    <citation type="journal article" date="2003" name="Genome Biol.">
        <title>Reinvestigation of the Saccharomyces cerevisiae genome annotation by comparison to the genome of a related fungus: Ashbya gossypii.</title>
        <authorList>
            <person name="Brachat S."/>
            <person name="Dietrich F.S."/>
            <person name="Voegeli S."/>
            <person name="Zhang Z."/>
            <person name="Stuart L."/>
            <person name="Lerch A."/>
            <person name="Gates K."/>
            <person name="Gaffney T.D."/>
            <person name="Philippsen P."/>
        </authorList>
    </citation>
    <scope>GENOME REANNOTATION</scope>
</reference>
<reference key="4">
    <citation type="journal article" date="2010" name="Mol. Cell">
        <title>A histone-fold complex and FANCM form a conserved DNA-remodeling complex to maintain genome stability.</title>
        <authorList>
            <person name="Yan Z."/>
            <person name="Delannoy M."/>
            <person name="Ling C."/>
            <person name="Daee D."/>
            <person name="Osman F."/>
            <person name="Muniandy P.A."/>
            <person name="Shen X."/>
            <person name="Oostra A.B."/>
            <person name="Du H."/>
            <person name="Steltenpool J."/>
            <person name="Lin T."/>
            <person name="Schuster B."/>
            <person name="Decaillet C."/>
            <person name="Stasiak A."/>
            <person name="Stasiak A.Z."/>
            <person name="Stone S."/>
            <person name="Hoatlin M.E."/>
            <person name="Schindler D."/>
            <person name="Woodcock C.L."/>
            <person name="Joenje H."/>
            <person name="Sen R."/>
            <person name="de Winter J.P."/>
            <person name="Li L."/>
            <person name="Seidman M.M."/>
            <person name="Whitby M.C."/>
            <person name="Myung K."/>
            <person name="Constantinousend A."/>
            <person name="Wang W."/>
        </authorList>
    </citation>
    <scope>FUNCTION</scope>
    <scope>INTERACTION WITH MHF1</scope>
</reference>
<reference key="5">
    <citation type="journal article" date="2012" name="Nat. Cell Biol.">
        <title>CENP-T proteins are conserved centromere receptors of the Ndc80 complex.</title>
        <authorList>
            <person name="Schleiffer A."/>
            <person name="Maier M."/>
            <person name="Litos G."/>
            <person name="Lampert F."/>
            <person name="Hornung P."/>
            <person name="Mechtler K."/>
            <person name="Westermann S."/>
        </authorList>
    </citation>
    <scope>IDENTIFICATION IN CCAN</scope>
    <scope>SUBUNIT</scope>
</reference>
<reference key="6">
    <citation type="journal article" date="2012" name="Structure">
        <title>Saccharomyces cerevisiae MHF complex structurally resembles the histones (H3-H4)(2) heterotetramer and functions as a heterotetramer.</title>
        <authorList>
            <person name="Yang H."/>
            <person name="Zhang T."/>
            <person name="Tao Y."/>
            <person name="Wu L."/>
            <person name="Li H.T."/>
            <person name="Zhou J.Q."/>
            <person name="Zhong C."/>
            <person name="Ding J."/>
        </authorList>
    </citation>
    <scope>X-RAY CRYSTALLOGRAPHY (2.40 ANGSTROMS)</scope>
    <scope>SUBUNIT</scope>
</reference>
<evidence type="ECO:0000250" key="1">
    <source>
        <dbReference type="UniProtKB" id="O74896"/>
    </source>
</evidence>
<evidence type="ECO:0000269" key="2">
    <source>
    </source>
</evidence>
<evidence type="ECO:0000269" key="3">
    <source>
    </source>
</evidence>
<evidence type="ECO:0000269" key="4">
    <source>
    </source>
</evidence>
<evidence type="ECO:0000303" key="5">
    <source>
    </source>
</evidence>
<evidence type="ECO:0000303" key="6">
    <source>
    </source>
</evidence>
<evidence type="ECO:0000305" key="7"/>
<evidence type="ECO:0000305" key="8">
    <source>
    </source>
</evidence>
<evidence type="ECO:0000305" key="9">
    <source>
    </source>
</evidence>
<evidence type="ECO:0000312" key="10">
    <source>
        <dbReference type="SGD" id="S000028520"/>
    </source>
</evidence>
<evidence type="ECO:0007829" key="11">
    <source>
        <dbReference type="PDB" id="3V9R"/>
    </source>
</evidence>
<organism>
    <name type="scientific">Saccharomyces cerevisiae (strain ATCC 204508 / S288c)</name>
    <name type="common">Baker's yeast</name>
    <dbReference type="NCBI Taxonomy" id="559292"/>
    <lineage>
        <taxon>Eukaryota</taxon>
        <taxon>Fungi</taxon>
        <taxon>Dikarya</taxon>
        <taxon>Ascomycota</taxon>
        <taxon>Saccharomycotina</taxon>
        <taxon>Saccharomycetes</taxon>
        <taxon>Saccharomycetales</taxon>
        <taxon>Saccharomycetaceae</taxon>
        <taxon>Saccharomyces</taxon>
    </lineage>
</organism>
<proteinExistence type="evidence at protein level"/>
<keyword id="KW-0002">3D-structure</keyword>
<keyword id="KW-0227">DNA damage</keyword>
<keyword id="KW-0234">DNA repair</keyword>
<keyword id="KW-0238">DNA-binding</keyword>
<keyword id="KW-1185">Reference proteome</keyword>
<gene>
    <name evidence="5" type="primary">MHF2</name>
    <name evidence="10" type="ordered locus">YDL160C-A</name>
</gene>
<protein>
    <recommendedName>
        <fullName evidence="7">Inner kinetochore subunit MHF2</fullName>
    </recommendedName>
    <alternativeName>
        <fullName evidence="6">CENP-X homolog</fullName>
    </alternativeName>
    <alternativeName>
        <fullName evidence="7">Constitutive centromere-associated network protein MHF2</fullName>
    </alternativeName>
    <alternativeName>
        <fullName evidence="8">MHF histone-fold complex subunit 2</fullName>
    </alternativeName>
    <alternativeName>
        <fullName evidence="5">MPH1-associated histone-fold protein 2</fullName>
    </alternativeName>
</protein>
<name>CENPX_YEAST</name>